<evidence type="ECO:0000255" key="1">
    <source>
        <dbReference type="HAMAP-Rule" id="MF_01337"/>
    </source>
</evidence>
<evidence type="ECO:0000256" key="2">
    <source>
        <dbReference type="SAM" id="MobiDB-lite"/>
    </source>
</evidence>
<evidence type="ECO:0000305" key="3"/>
<proteinExistence type="inferred from homology"/>
<name>RL18_STRP3</name>
<comment type="function">
    <text evidence="1">This is one of the proteins that bind and probably mediate the attachment of the 5S RNA into the large ribosomal subunit, where it forms part of the central protuberance.</text>
</comment>
<comment type="subunit">
    <text evidence="1">Part of the 50S ribosomal subunit; part of the 5S rRNA/L5/L18/L25 subcomplex. Contacts the 5S and 23S rRNAs.</text>
</comment>
<comment type="similarity">
    <text evidence="1">Belongs to the universal ribosomal protein uL18 family.</text>
</comment>
<organism>
    <name type="scientific">Streptococcus pyogenes serotype M3 (strain ATCC BAA-595 / MGAS315)</name>
    <dbReference type="NCBI Taxonomy" id="198466"/>
    <lineage>
        <taxon>Bacteria</taxon>
        <taxon>Bacillati</taxon>
        <taxon>Bacillota</taxon>
        <taxon>Bacilli</taxon>
        <taxon>Lactobacillales</taxon>
        <taxon>Streptococcaceae</taxon>
        <taxon>Streptococcus</taxon>
    </lineage>
</organism>
<feature type="chain" id="PRO_0000131360" description="Large ribosomal subunit protein uL18">
    <location>
        <begin position="1"/>
        <end position="118"/>
    </location>
</feature>
<feature type="region of interest" description="Disordered" evidence="2">
    <location>
        <begin position="1"/>
        <end position="25"/>
    </location>
</feature>
<feature type="compositionally biased region" description="Basic residues" evidence="2">
    <location>
        <begin position="10"/>
        <end position="20"/>
    </location>
</feature>
<accession>P0DE12</accession>
<accession>Q7CFK6</accession>
<accession>Q879Q9</accession>
<protein>
    <recommendedName>
        <fullName evidence="1">Large ribosomal subunit protein uL18</fullName>
    </recommendedName>
    <alternativeName>
        <fullName evidence="3">50S ribosomal protein L18</fullName>
    </alternativeName>
</protein>
<gene>
    <name evidence="1" type="primary">rplR</name>
    <name type="ordered locus">SpyM3_0056</name>
</gene>
<sequence length="118" mass="12866">MISKPDKNKIRQKRHRRVRGKLSGTADRPRLNVFRSNTGIYAQVIDDVAGVTLASASTLDKDVSKGTKTEQAVVVGKLVAERAVAKGISEVVFDRGGYLYHGRVKALADAARENGLKF</sequence>
<dbReference type="EMBL" id="AE014074">
    <property type="protein sequence ID" value="AAM78663.1"/>
    <property type="molecule type" value="Genomic_DNA"/>
</dbReference>
<dbReference type="RefSeq" id="WP_002987751.1">
    <property type="nucleotide sequence ID" value="NC_004070.1"/>
</dbReference>
<dbReference type="SMR" id="P0DE12"/>
<dbReference type="GeneID" id="69900042"/>
<dbReference type="KEGG" id="spg:SpyM3_0056"/>
<dbReference type="HOGENOM" id="CLU_098841_0_1_9"/>
<dbReference type="Proteomes" id="UP000000564">
    <property type="component" value="Chromosome"/>
</dbReference>
<dbReference type="GO" id="GO:0022625">
    <property type="term" value="C:cytosolic large ribosomal subunit"/>
    <property type="evidence" value="ECO:0007669"/>
    <property type="project" value="TreeGrafter"/>
</dbReference>
<dbReference type="GO" id="GO:0008097">
    <property type="term" value="F:5S rRNA binding"/>
    <property type="evidence" value="ECO:0007669"/>
    <property type="project" value="TreeGrafter"/>
</dbReference>
<dbReference type="GO" id="GO:0003735">
    <property type="term" value="F:structural constituent of ribosome"/>
    <property type="evidence" value="ECO:0007669"/>
    <property type="project" value="InterPro"/>
</dbReference>
<dbReference type="GO" id="GO:0006412">
    <property type="term" value="P:translation"/>
    <property type="evidence" value="ECO:0007669"/>
    <property type="project" value="UniProtKB-UniRule"/>
</dbReference>
<dbReference type="CDD" id="cd00432">
    <property type="entry name" value="Ribosomal_L18_L5e"/>
    <property type="match status" value="1"/>
</dbReference>
<dbReference type="FunFam" id="3.30.420.100:FF:000001">
    <property type="entry name" value="50S ribosomal protein L18"/>
    <property type="match status" value="1"/>
</dbReference>
<dbReference type="Gene3D" id="3.30.420.100">
    <property type="match status" value="1"/>
</dbReference>
<dbReference type="HAMAP" id="MF_01337_B">
    <property type="entry name" value="Ribosomal_uL18_B"/>
    <property type="match status" value="1"/>
</dbReference>
<dbReference type="InterPro" id="IPR004389">
    <property type="entry name" value="Ribosomal_uL18_bac-type"/>
</dbReference>
<dbReference type="InterPro" id="IPR005484">
    <property type="entry name" value="Ribosomal_uL18_bac/euk"/>
</dbReference>
<dbReference type="NCBIfam" id="TIGR00060">
    <property type="entry name" value="L18_bact"/>
    <property type="match status" value="1"/>
</dbReference>
<dbReference type="PANTHER" id="PTHR12899">
    <property type="entry name" value="39S RIBOSOMAL PROTEIN L18, MITOCHONDRIAL"/>
    <property type="match status" value="1"/>
</dbReference>
<dbReference type="PANTHER" id="PTHR12899:SF3">
    <property type="entry name" value="LARGE RIBOSOMAL SUBUNIT PROTEIN UL18M"/>
    <property type="match status" value="1"/>
</dbReference>
<dbReference type="Pfam" id="PF00861">
    <property type="entry name" value="Ribosomal_L18p"/>
    <property type="match status" value="1"/>
</dbReference>
<dbReference type="SUPFAM" id="SSF53137">
    <property type="entry name" value="Translational machinery components"/>
    <property type="match status" value="1"/>
</dbReference>
<keyword id="KW-0687">Ribonucleoprotein</keyword>
<keyword id="KW-0689">Ribosomal protein</keyword>
<keyword id="KW-0694">RNA-binding</keyword>
<keyword id="KW-0699">rRNA-binding</keyword>
<reference key="1">
    <citation type="journal article" date="2002" name="Proc. Natl. Acad. Sci. U.S.A.">
        <title>Genome sequence of a serotype M3 strain of group A Streptococcus: phage-encoded toxins, the high-virulence phenotype, and clone emergence.</title>
        <authorList>
            <person name="Beres S.B."/>
            <person name="Sylva G.L."/>
            <person name="Barbian K.D."/>
            <person name="Lei B."/>
            <person name="Hoff J.S."/>
            <person name="Mammarella N.D."/>
            <person name="Liu M.-Y."/>
            <person name="Smoot J.C."/>
            <person name="Porcella S.F."/>
            <person name="Parkins L.D."/>
            <person name="Campbell D.S."/>
            <person name="Smith T.M."/>
            <person name="McCormick J.K."/>
            <person name="Leung D.Y.M."/>
            <person name="Schlievert P.M."/>
            <person name="Musser J.M."/>
        </authorList>
    </citation>
    <scope>NUCLEOTIDE SEQUENCE [LARGE SCALE GENOMIC DNA]</scope>
    <source>
        <strain>ATCC BAA-595 / MGAS315</strain>
    </source>
</reference>